<gene>
    <name type="primary">SMCO1</name>
    <name type="synonym">C3orf43</name>
</gene>
<organism>
    <name type="scientific">Homo sapiens</name>
    <name type="common">Human</name>
    <dbReference type="NCBI Taxonomy" id="9606"/>
    <lineage>
        <taxon>Eukaryota</taxon>
        <taxon>Metazoa</taxon>
        <taxon>Chordata</taxon>
        <taxon>Craniata</taxon>
        <taxon>Vertebrata</taxon>
        <taxon>Euteleostomi</taxon>
        <taxon>Mammalia</taxon>
        <taxon>Eutheria</taxon>
        <taxon>Euarchontoglires</taxon>
        <taxon>Primates</taxon>
        <taxon>Haplorrhini</taxon>
        <taxon>Catarrhini</taxon>
        <taxon>Hominidae</taxon>
        <taxon>Homo</taxon>
    </lineage>
</organism>
<evidence type="ECO:0000255" key="1"/>
<evidence type="ECO:0000305" key="2"/>
<sequence>MNNETTTLISLKEAMKRVDHKLQALETQFKELDFTKDNLMQKFEHHSKALASQAAQDEMWTAVRALQLTSMELNILYSYVIEVLICLHTRVLEKLPDLVRGLPTLASVLRRKVKNKRVRVVWESILEECGLQEGDITALCTFFIARGNKAEHYTAKVRQMYIRDVTFLITNMVKNQALQDSLLRAVQVIEKGKAVRTPEKQKSSLEELIPSVKN</sequence>
<dbReference type="EMBL" id="AK123917">
    <property type="protein sequence ID" value="BAG53982.1"/>
    <property type="molecule type" value="mRNA"/>
</dbReference>
<dbReference type="EMBL" id="AC092933">
    <property type="status" value="NOT_ANNOTATED_CDS"/>
    <property type="molecule type" value="Genomic_DNA"/>
</dbReference>
<dbReference type="EMBL" id="BC118556">
    <property type="protein sequence ID" value="AAI18557.2"/>
    <property type="molecule type" value="mRNA"/>
</dbReference>
<dbReference type="EMBL" id="BC118636">
    <property type="protein sequence ID" value="AAI18637.2"/>
    <property type="molecule type" value="mRNA"/>
</dbReference>
<dbReference type="CCDS" id="CCDS43192.1"/>
<dbReference type="RefSeq" id="NP_001071125.1">
    <property type="nucleotide sequence ID" value="NM_001077657.3"/>
</dbReference>
<dbReference type="RefSeq" id="NP_001307402.1">
    <property type="nucleotide sequence ID" value="NM_001320473.1"/>
</dbReference>
<dbReference type="SMR" id="Q147U7"/>
<dbReference type="BioGRID" id="129121">
    <property type="interactions" value="8"/>
</dbReference>
<dbReference type="FunCoup" id="Q147U7">
    <property type="interactions" value="5"/>
</dbReference>
<dbReference type="IntAct" id="Q147U7">
    <property type="interactions" value="7"/>
</dbReference>
<dbReference type="MINT" id="Q147U7"/>
<dbReference type="STRING" id="9606.ENSP00000380671"/>
<dbReference type="iPTMnet" id="Q147U7"/>
<dbReference type="PhosphoSitePlus" id="Q147U7"/>
<dbReference type="BioMuta" id="SMCO1"/>
<dbReference type="DMDM" id="158937233"/>
<dbReference type="MassIVE" id="Q147U7"/>
<dbReference type="PaxDb" id="9606-ENSP00000380671"/>
<dbReference type="PeptideAtlas" id="Q147U7"/>
<dbReference type="Antibodypedia" id="68999">
    <property type="antibodies" value="71 antibodies from 13 providers"/>
</dbReference>
<dbReference type="DNASU" id="255798"/>
<dbReference type="Ensembl" id="ENST00000397537.3">
    <property type="protein sequence ID" value="ENSP00000380671.2"/>
    <property type="gene ID" value="ENSG00000214097.5"/>
</dbReference>
<dbReference type="GeneID" id="255798"/>
<dbReference type="KEGG" id="hsa:255798"/>
<dbReference type="MANE-Select" id="ENST00000397537.3">
    <property type="protein sequence ID" value="ENSP00000380671.2"/>
    <property type="RefSeq nucleotide sequence ID" value="NM_001077657.3"/>
    <property type="RefSeq protein sequence ID" value="NP_001071125.1"/>
</dbReference>
<dbReference type="UCSC" id="uc003fws.4">
    <property type="organism name" value="human"/>
</dbReference>
<dbReference type="AGR" id="HGNC:27407"/>
<dbReference type="CTD" id="255798"/>
<dbReference type="DisGeNET" id="255798"/>
<dbReference type="GeneCards" id="SMCO1"/>
<dbReference type="HGNC" id="HGNC:27407">
    <property type="gene designation" value="SMCO1"/>
</dbReference>
<dbReference type="HPA" id="ENSG00000214097">
    <property type="expression patterns" value="Group enriched (heart muscle, skeletal muscle, tongue)"/>
</dbReference>
<dbReference type="neXtProt" id="NX_Q147U7"/>
<dbReference type="PharmGKB" id="PA142672378"/>
<dbReference type="VEuPathDB" id="HostDB:ENSG00000214097"/>
<dbReference type="eggNOG" id="ENOG502S2Q0">
    <property type="taxonomic scope" value="Eukaryota"/>
</dbReference>
<dbReference type="GeneTree" id="ENSGT00390000010564"/>
<dbReference type="HOGENOM" id="CLU_112082_0_0_1"/>
<dbReference type="InParanoid" id="Q147U7"/>
<dbReference type="OMA" id="FMITNMV"/>
<dbReference type="OrthoDB" id="9882837at2759"/>
<dbReference type="PAN-GO" id="Q147U7">
    <property type="GO annotations" value="0 GO annotations based on evolutionary models"/>
</dbReference>
<dbReference type="PhylomeDB" id="Q147U7"/>
<dbReference type="TreeFam" id="TF337928"/>
<dbReference type="PathwayCommons" id="Q147U7"/>
<dbReference type="SignaLink" id="Q147U7"/>
<dbReference type="BioGRID-ORCS" id="255798">
    <property type="hits" value="10 hits in 1114 CRISPR screens"/>
</dbReference>
<dbReference type="ChiTaRS" id="SMCO1">
    <property type="organism name" value="human"/>
</dbReference>
<dbReference type="GenomeRNAi" id="255798"/>
<dbReference type="Pharos" id="Q147U7">
    <property type="development level" value="Tdark"/>
</dbReference>
<dbReference type="PRO" id="PR:Q147U7"/>
<dbReference type="Proteomes" id="UP000005640">
    <property type="component" value="Chromosome 3"/>
</dbReference>
<dbReference type="RNAct" id="Q147U7">
    <property type="molecule type" value="protein"/>
</dbReference>
<dbReference type="Bgee" id="ENSG00000214097">
    <property type="expression patterns" value="Expressed in hindlimb stylopod muscle and 66 other cell types or tissues"/>
</dbReference>
<dbReference type="ExpressionAtlas" id="Q147U7">
    <property type="expression patterns" value="baseline and differential"/>
</dbReference>
<dbReference type="GO" id="GO:0016020">
    <property type="term" value="C:membrane"/>
    <property type="evidence" value="ECO:0007669"/>
    <property type="project" value="UniProtKB-SubCell"/>
</dbReference>
<dbReference type="InterPro" id="IPR027875">
    <property type="entry name" value="DUF4547"/>
</dbReference>
<dbReference type="PANTHER" id="PTHR35979">
    <property type="entry name" value="SINGLE-PASS MEMBRANE AND COILED-COIL DOMAIN-CONTAINING PROTEIN 1"/>
    <property type="match status" value="1"/>
</dbReference>
<dbReference type="PANTHER" id="PTHR35979:SF1">
    <property type="entry name" value="SINGLE-PASS MEMBRANE AND COILED-COIL DOMAIN-CONTAINING PROTEIN 1"/>
    <property type="match status" value="1"/>
</dbReference>
<dbReference type="Pfam" id="PF15080">
    <property type="entry name" value="DUF4547"/>
    <property type="match status" value="1"/>
</dbReference>
<feature type="chain" id="PRO_0000269483" description="Single-pass membrane and coiled-coil domain-containing protein 1">
    <location>
        <begin position="1"/>
        <end position="214"/>
    </location>
</feature>
<feature type="transmembrane region" description="Helical" evidence="1">
    <location>
        <begin position="65"/>
        <end position="81"/>
    </location>
</feature>
<feature type="coiled-coil region" evidence="1">
    <location>
        <begin position="6"/>
        <end position="42"/>
    </location>
</feature>
<feature type="sequence variant" id="VAR_050721" description="In dbSNP:rs9869292.">
    <original>H</original>
    <variation>Y</variation>
    <location>
        <position position="20"/>
    </location>
</feature>
<feature type="sequence variant" id="VAR_050722" description="In dbSNP:rs11926701.">
    <original>R</original>
    <variation>W</variation>
    <location>
        <position position="64"/>
    </location>
</feature>
<proteinExistence type="evidence at protein level"/>
<name>SMCO1_HUMAN</name>
<keyword id="KW-0175">Coiled coil</keyword>
<keyword id="KW-0472">Membrane</keyword>
<keyword id="KW-1267">Proteomics identification</keyword>
<keyword id="KW-1185">Reference proteome</keyword>
<keyword id="KW-0812">Transmembrane</keyword>
<keyword id="KW-1133">Transmembrane helix</keyword>
<reference key="1">
    <citation type="journal article" date="2004" name="Nat. Genet.">
        <title>Complete sequencing and characterization of 21,243 full-length human cDNAs.</title>
        <authorList>
            <person name="Ota T."/>
            <person name="Suzuki Y."/>
            <person name="Nishikawa T."/>
            <person name="Otsuki T."/>
            <person name="Sugiyama T."/>
            <person name="Irie R."/>
            <person name="Wakamatsu A."/>
            <person name="Hayashi K."/>
            <person name="Sato H."/>
            <person name="Nagai K."/>
            <person name="Kimura K."/>
            <person name="Makita H."/>
            <person name="Sekine M."/>
            <person name="Obayashi M."/>
            <person name="Nishi T."/>
            <person name="Shibahara T."/>
            <person name="Tanaka T."/>
            <person name="Ishii S."/>
            <person name="Yamamoto J."/>
            <person name="Saito K."/>
            <person name="Kawai Y."/>
            <person name="Isono Y."/>
            <person name="Nakamura Y."/>
            <person name="Nagahari K."/>
            <person name="Murakami K."/>
            <person name="Yasuda T."/>
            <person name="Iwayanagi T."/>
            <person name="Wagatsuma M."/>
            <person name="Shiratori A."/>
            <person name="Sudo H."/>
            <person name="Hosoiri T."/>
            <person name="Kaku Y."/>
            <person name="Kodaira H."/>
            <person name="Kondo H."/>
            <person name="Sugawara M."/>
            <person name="Takahashi M."/>
            <person name="Kanda K."/>
            <person name="Yokoi T."/>
            <person name="Furuya T."/>
            <person name="Kikkawa E."/>
            <person name="Omura Y."/>
            <person name="Abe K."/>
            <person name="Kamihara K."/>
            <person name="Katsuta N."/>
            <person name="Sato K."/>
            <person name="Tanikawa M."/>
            <person name="Yamazaki M."/>
            <person name="Ninomiya K."/>
            <person name="Ishibashi T."/>
            <person name="Yamashita H."/>
            <person name="Murakawa K."/>
            <person name="Fujimori K."/>
            <person name="Tanai H."/>
            <person name="Kimata M."/>
            <person name="Watanabe M."/>
            <person name="Hiraoka S."/>
            <person name="Chiba Y."/>
            <person name="Ishida S."/>
            <person name="Ono Y."/>
            <person name="Takiguchi S."/>
            <person name="Watanabe S."/>
            <person name="Yosida M."/>
            <person name="Hotuta T."/>
            <person name="Kusano J."/>
            <person name="Kanehori K."/>
            <person name="Takahashi-Fujii A."/>
            <person name="Hara H."/>
            <person name="Tanase T.-O."/>
            <person name="Nomura Y."/>
            <person name="Togiya S."/>
            <person name="Komai F."/>
            <person name="Hara R."/>
            <person name="Takeuchi K."/>
            <person name="Arita M."/>
            <person name="Imose N."/>
            <person name="Musashino K."/>
            <person name="Yuuki H."/>
            <person name="Oshima A."/>
            <person name="Sasaki N."/>
            <person name="Aotsuka S."/>
            <person name="Yoshikawa Y."/>
            <person name="Matsunawa H."/>
            <person name="Ichihara T."/>
            <person name="Shiohata N."/>
            <person name="Sano S."/>
            <person name="Moriya S."/>
            <person name="Momiyama H."/>
            <person name="Satoh N."/>
            <person name="Takami S."/>
            <person name="Terashima Y."/>
            <person name="Suzuki O."/>
            <person name="Nakagawa S."/>
            <person name="Senoh A."/>
            <person name="Mizoguchi H."/>
            <person name="Goto Y."/>
            <person name="Shimizu F."/>
            <person name="Wakebe H."/>
            <person name="Hishigaki H."/>
            <person name="Watanabe T."/>
            <person name="Sugiyama A."/>
            <person name="Takemoto M."/>
            <person name="Kawakami B."/>
            <person name="Yamazaki M."/>
            <person name="Watanabe K."/>
            <person name="Kumagai A."/>
            <person name="Itakura S."/>
            <person name="Fukuzumi Y."/>
            <person name="Fujimori Y."/>
            <person name="Komiyama M."/>
            <person name="Tashiro H."/>
            <person name="Tanigami A."/>
            <person name="Fujiwara T."/>
            <person name="Ono T."/>
            <person name="Yamada K."/>
            <person name="Fujii Y."/>
            <person name="Ozaki K."/>
            <person name="Hirao M."/>
            <person name="Ohmori Y."/>
            <person name="Kawabata A."/>
            <person name="Hikiji T."/>
            <person name="Kobatake N."/>
            <person name="Inagaki H."/>
            <person name="Ikema Y."/>
            <person name="Okamoto S."/>
            <person name="Okitani R."/>
            <person name="Kawakami T."/>
            <person name="Noguchi S."/>
            <person name="Itoh T."/>
            <person name="Shigeta K."/>
            <person name="Senba T."/>
            <person name="Matsumura K."/>
            <person name="Nakajima Y."/>
            <person name="Mizuno T."/>
            <person name="Morinaga M."/>
            <person name="Sasaki M."/>
            <person name="Togashi T."/>
            <person name="Oyama M."/>
            <person name="Hata H."/>
            <person name="Watanabe M."/>
            <person name="Komatsu T."/>
            <person name="Mizushima-Sugano J."/>
            <person name="Satoh T."/>
            <person name="Shirai Y."/>
            <person name="Takahashi Y."/>
            <person name="Nakagawa K."/>
            <person name="Okumura K."/>
            <person name="Nagase T."/>
            <person name="Nomura N."/>
            <person name="Kikuchi H."/>
            <person name="Masuho Y."/>
            <person name="Yamashita R."/>
            <person name="Nakai K."/>
            <person name="Yada T."/>
            <person name="Nakamura Y."/>
            <person name="Ohara O."/>
            <person name="Isogai T."/>
            <person name="Sugano S."/>
        </authorList>
    </citation>
    <scope>NUCLEOTIDE SEQUENCE [LARGE SCALE MRNA]</scope>
    <source>
        <tissue>Pericardium</tissue>
    </source>
</reference>
<reference key="2">
    <citation type="journal article" date="2006" name="Nature">
        <title>The DNA sequence, annotation and analysis of human chromosome 3.</title>
        <authorList>
            <person name="Muzny D.M."/>
            <person name="Scherer S.E."/>
            <person name="Kaul R."/>
            <person name="Wang J."/>
            <person name="Yu J."/>
            <person name="Sudbrak R."/>
            <person name="Buhay C.J."/>
            <person name="Chen R."/>
            <person name="Cree A."/>
            <person name="Ding Y."/>
            <person name="Dugan-Rocha S."/>
            <person name="Gill R."/>
            <person name="Gunaratne P."/>
            <person name="Harris R.A."/>
            <person name="Hawes A.C."/>
            <person name="Hernandez J."/>
            <person name="Hodgson A.V."/>
            <person name="Hume J."/>
            <person name="Jackson A."/>
            <person name="Khan Z.M."/>
            <person name="Kovar-Smith C."/>
            <person name="Lewis L.R."/>
            <person name="Lozado R.J."/>
            <person name="Metzker M.L."/>
            <person name="Milosavljevic A."/>
            <person name="Miner G.R."/>
            <person name="Morgan M.B."/>
            <person name="Nazareth L.V."/>
            <person name="Scott G."/>
            <person name="Sodergren E."/>
            <person name="Song X.-Z."/>
            <person name="Steffen D."/>
            <person name="Wei S."/>
            <person name="Wheeler D.A."/>
            <person name="Wright M.W."/>
            <person name="Worley K.C."/>
            <person name="Yuan Y."/>
            <person name="Zhang Z."/>
            <person name="Adams C.Q."/>
            <person name="Ansari-Lari M.A."/>
            <person name="Ayele M."/>
            <person name="Brown M.J."/>
            <person name="Chen G."/>
            <person name="Chen Z."/>
            <person name="Clendenning J."/>
            <person name="Clerc-Blankenburg K.P."/>
            <person name="Chen R."/>
            <person name="Chen Z."/>
            <person name="Davis C."/>
            <person name="Delgado O."/>
            <person name="Dinh H.H."/>
            <person name="Dong W."/>
            <person name="Draper H."/>
            <person name="Ernst S."/>
            <person name="Fu G."/>
            <person name="Gonzalez-Garay M.L."/>
            <person name="Garcia D.K."/>
            <person name="Gillett W."/>
            <person name="Gu J."/>
            <person name="Hao B."/>
            <person name="Haugen E."/>
            <person name="Havlak P."/>
            <person name="He X."/>
            <person name="Hennig S."/>
            <person name="Hu S."/>
            <person name="Huang W."/>
            <person name="Jackson L.R."/>
            <person name="Jacob L.S."/>
            <person name="Kelly S.H."/>
            <person name="Kube M."/>
            <person name="Levy R."/>
            <person name="Li Z."/>
            <person name="Liu B."/>
            <person name="Liu J."/>
            <person name="Liu W."/>
            <person name="Lu J."/>
            <person name="Maheshwari M."/>
            <person name="Nguyen B.-V."/>
            <person name="Okwuonu G.O."/>
            <person name="Palmeiri A."/>
            <person name="Pasternak S."/>
            <person name="Perez L.M."/>
            <person name="Phelps K.A."/>
            <person name="Plopper F.J."/>
            <person name="Qiang B."/>
            <person name="Raymond C."/>
            <person name="Rodriguez R."/>
            <person name="Saenphimmachak C."/>
            <person name="Santibanez J."/>
            <person name="Shen H."/>
            <person name="Shen Y."/>
            <person name="Subramanian S."/>
            <person name="Tabor P.E."/>
            <person name="Verduzco D."/>
            <person name="Waldron L."/>
            <person name="Wang J."/>
            <person name="Wang J."/>
            <person name="Wang Q."/>
            <person name="Williams G.A."/>
            <person name="Wong G.K.-S."/>
            <person name="Yao Z."/>
            <person name="Zhang J."/>
            <person name="Zhang X."/>
            <person name="Zhao G."/>
            <person name="Zhou J."/>
            <person name="Zhou Y."/>
            <person name="Nelson D."/>
            <person name="Lehrach H."/>
            <person name="Reinhardt R."/>
            <person name="Naylor S.L."/>
            <person name="Yang H."/>
            <person name="Olson M."/>
            <person name="Weinstock G."/>
            <person name="Gibbs R.A."/>
        </authorList>
    </citation>
    <scope>NUCLEOTIDE SEQUENCE [LARGE SCALE GENOMIC DNA]</scope>
</reference>
<reference key="3">
    <citation type="journal article" date="2004" name="Genome Res.">
        <title>The status, quality, and expansion of the NIH full-length cDNA project: the Mammalian Gene Collection (MGC).</title>
        <authorList>
            <consortium name="The MGC Project Team"/>
        </authorList>
    </citation>
    <scope>NUCLEOTIDE SEQUENCE [LARGE SCALE MRNA]</scope>
</reference>
<accession>Q147U7</accession>
<accession>B3KW20</accession>
<protein>
    <recommendedName>
        <fullName>Single-pass membrane and coiled-coil domain-containing protein 1</fullName>
    </recommendedName>
    <alternativeName>
        <fullName>Single-pass membrane protein with coiled-coil domains 1</fullName>
    </alternativeName>
</protein>
<comment type="interaction">
    <interactant intactId="EBI-11735944">
        <id>Q147U7</id>
    </interactant>
    <interactant intactId="EBI-12903902">
        <id>Q8TC99</id>
        <label>FNDC8</label>
    </interactant>
    <organismsDiffer>false</organismsDiffer>
    <experiments>3</experiments>
</comment>
<comment type="subcellular location">
    <subcellularLocation>
        <location evidence="2">Membrane</location>
        <topology evidence="2">Single-pass membrane protein</topology>
    </subcellularLocation>
</comment>